<sequence>MADKMVRTPKCSRCRNHGFLVPVKGHAGKCRWKQCLCEKCYLISERQKIMAAQKVLKTQAAEEEQEAALCAQGPKQASGAAAAAPAPVPVPAASLRPLSPGTPSGDADPGPEGRAAACFFEQPPRGRNPGPRALQPVLGGRSHVEPSERAAVAMPSLAGPPFGAEAAGSGYPGPLDLRRPMRTVPGPLFTDFVRPLNINPDRALGPEYPGGSSMHPYCPFPLGYLDAPPGVPLQQGFRHVSRSQYQGGGLVSEPGGDFQPSYYLPPPPPPLPPLPPLPPQPQFLPPGYLSALHFLPPPPPPPPPSSFSLTVLFDTDKENTDDQDAEVLSGEPSQPSSQEQSD</sequence>
<reference key="1">
    <citation type="journal article" date="2004" name="Nat. Genet.">
        <title>Complete sequencing and characterization of 21,243 full-length human cDNAs.</title>
        <authorList>
            <person name="Ota T."/>
            <person name="Suzuki Y."/>
            <person name="Nishikawa T."/>
            <person name="Otsuki T."/>
            <person name="Sugiyama T."/>
            <person name="Irie R."/>
            <person name="Wakamatsu A."/>
            <person name="Hayashi K."/>
            <person name="Sato H."/>
            <person name="Nagai K."/>
            <person name="Kimura K."/>
            <person name="Makita H."/>
            <person name="Sekine M."/>
            <person name="Obayashi M."/>
            <person name="Nishi T."/>
            <person name="Shibahara T."/>
            <person name="Tanaka T."/>
            <person name="Ishii S."/>
            <person name="Yamamoto J."/>
            <person name="Saito K."/>
            <person name="Kawai Y."/>
            <person name="Isono Y."/>
            <person name="Nakamura Y."/>
            <person name="Nagahari K."/>
            <person name="Murakami K."/>
            <person name="Yasuda T."/>
            <person name="Iwayanagi T."/>
            <person name="Wagatsuma M."/>
            <person name="Shiratori A."/>
            <person name="Sudo H."/>
            <person name="Hosoiri T."/>
            <person name="Kaku Y."/>
            <person name="Kodaira H."/>
            <person name="Kondo H."/>
            <person name="Sugawara M."/>
            <person name="Takahashi M."/>
            <person name="Kanda K."/>
            <person name="Yokoi T."/>
            <person name="Furuya T."/>
            <person name="Kikkawa E."/>
            <person name="Omura Y."/>
            <person name="Abe K."/>
            <person name="Kamihara K."/>
            <person name="Katsuta N."/>
            <person name="Sato K."/>
            <person name="Tanikawa M."/>
            <person name="Yamazaki M."/>
            <person name="Ninomiya K."/>
            <person name="Ishibashi T."/>
            <person name="Yamashita H."/>
            <person name="Murakawa K."/>
            <person name="Fujimori K."/>
            <person name="Tanai H."/>
            <person name="Kimata M."/>
            <person name="Watanabe M."/>
            <person name="Hiraoka S."/>
            <person name="Chiba Y."/>
            <person name="Ishida S."/>
            <person name="Ono Y."/>
            <person name="Takiguchi S."/>
            <person name="Watanabe S."/>
            <person name="Yosida M."/>
            <person name="Hotuta T."/>
            <person name="Kusano J."/>
            <person name="Kanehori K."/>
            <person name="Takahashi-Fujii A."/>
            <person name="Hara H."/>
            <person name="Tanase T.-O."/>
            <person name="Nomura Y."/>
            <person name="Togiya S."/>
            <person name="Komai F."/>
            <person name="Hara R."/>
            <person name="Takeuchi K."/>
            <person name="Arita M."/>
            <person name="Imose N."/>
            <person name="Musashino K."/>
            <person name="Yuuki H."/>
            <person name="Oshima A."/>
            <person name="Sasaki N."/>
            <person name="Aotsuka S."/>
            <person name="Yoshikawa Y."/>
            <person name="Matsunawa H."/>
            <person name="Ichihara T."/>
            <person name="Shiohata N."/>
            <person name="Sano S."/>
            <person name="Moriya S."/>
            <person name="Momiyama H."/>
            <person name="Satoh N."/>
            <person name="Takami S."/>
            <person name="Terashima Y."/>
            <person name="Suzuki O."/>
            <person name="Nakagawa S."/>
            <person name="Senoh A."/>
            <person name="Mizoguchi H."/>
            <person name="Goto Y."/>
            <person name="Shimizu F."/>
            <person name="Wakebe H."/>
            <person name="Hishigaki H."/>
            <person name="Watanabe T."/>
            <person name="Sugiyama A."/>
            <person name="Takemoto M."/>
            <person name="Kawakami B."/>
            <person name="Yamazaki M."/>
            <person name="Watanabe K."/>
            <person name="Kumagai A."/>
            <person name="Itakura S."/>
            <person name="Fukuzumi Y."/>
            <person name="Fujimori Y."/>
            <person name="Komiyama M."/>
            <person name="Tashiro H."/>
            <person name="Tanigami A."/>
            <person name="Fujiwara T."/>
            <person name="Ono T."/>
            <person name="Yamada K."/>
            <person name="Fujii Y."/>
            <person name="Ozaki K."/>
            <person name="Hirao M."/>
            <person name="Ohmori Y."/>
            <person name="Kawabata A."/>
            <person name="Hikiji T."/>
            <person name="Kobatake N."/>
            <person name="Inagaki H."/>
            <person name="Ikema Y."/>
            <person name="Okamoto S."/>
            <person name="Okitani R."/>
            <person name="Kawakami T."/>
            <person name="Noguchi S."/>
            <person name="Itoh T."/>
            <person name="Shigeta K."/>
            <person name="Senba T."/>
            <person name="Matsumura K."/>
            <person name="Nakajima Y."/>
            <person name="Mizuno T."/>
            <person name="Morinaga M."/>
            <person name="Sasaki M."/>
            <person name="Togashi T."/>
            <person name="Oyama M."/>
            <person name="Hata H."/>
            <person name="Watanabe M."/>
            <person name="Komatsu T."/>
            <person name="Mizushima-Sugano J."/>
            <person name="Satoh T."/>
            <person name="Shirai Y."/>
            <person name="Takahashi Y."/>
            <person name="Nakagawa K."/>
            <person name="Okumura K."/>
            <person name="Nagase T."/>
            <person name="Nomura N."/>
            <person name="Kikuchi H."/>
            <person name="Masuho Y."/>
            <person name="Yamashita R."/>
            <person name="Nakai K."/>
            <person name="Yada T."/>
            <person name="Nakamura Y."/>
            <person name="Ohara O."/>
            <person name="Isogai T."/>
            <person name="Sugano S."/>
        </authorList>
    </citation>
    <scope>NUCLEOTIDE SEQUENCE [LARGE SCALE MRNA]</scope>
    <source>
        <tissue>Testis</tissue>
    </source>
</reference>
<reference key="2">
    <citation type="journal article" date="2006" name="Nature">
        <title>The DNA sequence and biological annotation of human chromosome 1.</title>
        <authorList>
            <person name="Gregory S.G."/>
            <person name="Barlow K.F."/>
            <person name="McLay K.E."/>
            <person name="Kaul R."/>
            <person name="Swarbreck D."/>
            <person name="Dunham A."/>
            <person name="Scott C.E."/>
            <person name="Howe K.L."/>
            <person name="Woodfine K."/>
            <person name="Spencer C.C.A."/>
            <person name="Jones M.C."/>
            <person name="Gillson C."/>
            <person name="Searle S."/>
            <person name="Zhou Y."/>
            <person name="Kokocinski F."/>
            <person name="McDonald L."/>
            <person name="Evans R."/>
            <person name="Phillips K."/>
            <person name="Atkinson A."/>
            <person name="Cooper R."/>
            <person name="Jones C."/>
            <person name="Hall R.E."/>
            <person name="Andrews T.D."/>
            <person name="Lloyd C."/>
            <person name="Ainscough R."/>
            <person name="Almeida J.P."/>
            <person name="Ambrose K.D."/>
            <person name="Anderson F."/>
            <person name="Andrew R.W."/>
            <person name="Ashwell R.I.S."/>
            <person name="Aubin K."/>
            <person name="Babbage A.K."/>
            <person name="Bagguley C.L."/>
            <person name="Bailey J."/>
            <person name="Beasley H."/>
            <person name="Bethel G."/>
            <person name="Bird C.P."/>
            <person name="Bray-Allen S."/>
            <person name="Brown J.Y."/>
            <person name="Brown A.J."/>
            <person name="Buckley D."/>
            <person name="Burton J."/>
            <person name="Bye J."/>
            <person name="Carder C."/>
            <person name="Chapman J.C."/>
            <person name="Clark S.Y."/>
            <person name="Clarke G."/>
            <person name="Clee C."/>
            <person name="Cobley V."/>
            <person name="Collier R.E."/>
            <person name="Corby N."/>
            <person name="Coville G.J."/>
            <person name="Davies J."/>
            <person name="Deadman R."/>
            <person name="Dunn M."/>
            <person name="Earthrowl M."/>
            <person name="Ellington A.G."/>
            <person name="Errington H."/>
            <person name="Frankish A."/>
            <person name="Frankland J."/>
            <person name="French L."/>
            <person name="Garner P."/>
            <person name="Garnett J."/>
            <person name="Gay L."/>
            <person name="Ghori M.R.J."/>
            <person name="Gibson R."/>
            <person name="Gilby L.M."/>
            <person name="Gillett W."/>
            <person name="Glithero R.J."/>
            <person name="Grafham D.V."/>
            <person name="Griffiths C."/>
            <person name="Griffiths-Jones S."/>
            <person name="Grocock R."/>
            <person name="Hammond S."/>
            <person name="Harrison E.S.I."/>
            <person name="Hart E."/>
            <person name="Haugen E."/>
            <person name="Heath P.D."/>
            <person name="Holmes S."/>
            <person name="Holt K."/>
            <person name="Howden P.J."/>
            <person name="Hunt A.R."/>
            <person name="Hunt S.E."/>
            <person name="Hunter G."/>
            <person name="Isherwood J."/>
            <person name="James R."/>
            <person name="Johnson C."/>
            <person name="Johnson D."/>
            <person name="Joy A."/>
            <person name="Kay M."/>
            <person name="Kershaw J.K."/>
            <person name="Kibukawa M."/>
            <person name="Kimberley A.M."/>
            <person name="King A."/>
            <person name="Knights A.J."/>
            <person name="Lad H."/>
            <person name="Laird G."/>
            <person name="Lawlor S."/>
            <person name="Leongamornlert D.A."/>
            <person name="Lloyd D.M."/>
            <person name="Loveland J."/>
            <person name="Lovell J."/>
            <person name="Lush M.J."/>
            <person name="Lyne R."/>
            <person name="Martin S."/>
            <person name="Mashreghi-Mohammadi M."/>
            <person name="Matthews L."/>
            <person name="Matthews N.S.W."/>
            <person name="McLaren S."/>
            <person name="Milne S."/>
            <person name="Mistry S."/>
            <person name="Moore M.J.F."/>
            <person name="Nickerson T."/>
            <person name="O'Dell C.N."/>
            <person name="Oliver K."/>
            <person name="Palmeiri A."/>
            <person name="Palmer S.A."/>
            <person name="Parker A."/>
            <person name="Patel D."/>
            <person name="Pearce A.V."/>
            <person name="Peck A.I."/>
            <person name="Pelan S."/>
            <person name="Phelps K."/>
            <person name="Phillimore B.J."/>
            <person name="Plumb R."/>
            <person name="Rajan J."/>
            <person name="Raymond C."/>
            <person name="Rouse G."/>
            <person name="Saenphimmachak C."/>
            <person name="Sehra H.K."/>
            <person name="Sheridan E."/>
            <person name="Shownkeen R."/>
            <person name="Sims S."/>
            <person name="Skuce C.D."/>
            <person name="Smith M."/>
            <person name="Steward C."/>
            <person name="Subramanian S."/>
            <person name="Sycamore N."/>
            <person name="Tracey A."/>
            <person name="Tromans A."/>
            <person name="Van Helmond Z."/>
            <person name="Wall M."/>
            <person name="Wallis J.M."/>
            <person name="White S."/>
            <person name="Whitehead S.L."/>
            <person name="Wilkinson J.E."/>
            <person name="Willey D.L."/>
            <person name="Williams H."/>
            <person name="Wilming L."/>
            <person name="Wray P.W."/>
            <person name="Wu Z."/>
            <person name="Coulson A."/>
            <person name="Vaudin M."/>
            <person name="Sulston J.E."/>
            <person name="Durbin R.M."/>
            <person name="Hubbard T."/>
            <person name="Wooster R."/>
            <person name="Dunham I."/>
            <person name="Carter N.P."/>
            <person name="McVean G."/>
            <person name="Ross M.T."/>
            <person name="Harrow J."/>
            <person name="Olson M.V."/>
            <person name="Beck S."/>
            <person name="Rogers J."/>
            <person name="Bentley D.R."/>
        </authorList>
    </citation>
    <scope>NUCLEOTIDE SEQUENCE [LARGE SCALE GENOMIC DNA]</scope>
</reference>
<reference key="3">
    <citation type="submission" date="2005-09" db="EMBL/GenBank/DDBJ databases">
        <authorList>
            <person name="Mural R.J."/>
            <person name="Istrail S."/>
            <person name="Sutton G.G."/>
            <person name="Florea L."/>
            <person name="Halpern A.L."/>
            <person name="Mobarry C.M."/>
            <person name="Lippert R."/>
            <person name="Walenz B."/>
            <person name="Shatkay H."/>
            <person name="Dew I."/>
            <person name="Miller J.R."/>
            <person name="Flanigan M.J."/>
            <person name="Edwards N.J."/>
            <person name="Bolanos R."/>
            <person name="Fasulo D."/>
            <person name="Halldorsson B.V."/>
            <person name="Hannenhalli S."/>
            <person name="Turner R."/>
            <person name="Yooseph S."/>
            <person name="Lu F."/>
            <person name="Nusskern D.R."/>
            <person name="Shue B.C."/>
            <person name="Zheng X.H."/>
            <person name="Zhong F."/>
            <person name="Delcher A.L."/>
            <person name="Huson D.H."/>
            <person name="Kravitz S.A."/>
            <person name="Mouchard L."/>
            <person name="Reinert K."/>
            <person name="Remington K.A."/>
            <person name="Clark A.G."/>
            <person name="Waterman M.S."/>
            <person name="Eichler E.E."/>
            <person name="Adams M.D."/>
            <person name="Hunkapiller M.W."/>
            <person name="Myers E.W."/>
            <person name="Venter J.C."/>
        </authorList>
    </citation>
    <scope>NUCLEOTIDE SEQUENCE [LARGE SCALE GENOMIC DNA]</scope>
</reference>
<reference key="4">
    <citation type="journal article" date="2002" name="Genomics">
        <title>Novel paralogy relations among human chromosomes support a link between the phylogeny of doublesex-related genes and the evolution of sex determination.</title>
        <authorList>
            <person name="Ottolenghi C."/>
            <person name="Fellous M."/>
            <person name="Barbieri M."/>
            <person name="McElreavey K."/>
        </authorList>
    </citation>
    <scope>NUCLEOTIDE SEQUENCE [MRNA] OF 7-342</scope>
    <scope>TISSUE SPECIFICITY</scope>
    <source>
        <tissue>Testis</tissue>
    </source>
</reference>
<accession>Q96MA1</accession>
<accession>Q96SD2</accession>
<comment type="interaction">
    <interactant intactId="EBI-954466">
        <id>Q96MA1</id>
    </interactant>
    <interactant intactId="EBI-6509505">
        <id>Q0VD86</id>
        <label>INCA1</label>
    </interactant>
    <organismsDiffer>false</organismsDiffer>
    <experiments>3</experiments>
</comment>
<comment type="interaction">
    <interactant intactId="EBI-954466">
        <id>Q96MA1</id>
    </interactant>
    <interactant intactId="EBI-1048945">
        <id>Q3LI72</id>
        <label>KRTAP19-5</label>
    </interactant>
    <organismsDiffer>false</organismsDiffer>
    <experiments>3</experiments>
</comment>
<comment type="interaction">
    <interactant intactId="EBI-954466">
        <id>Q96MA1</id>
    </interactant>
    <interactant intactId="EBI-12805508">
        <id>Q3LI70</id>
        <label>KRTAP19-6</label>
    </interactant>
    <organismsDiffer>false</organismsDiffer>
    <experiments>3</experiments>
</comment>
<comment type="interaction">
    <interactant intactId="EBI-954466">
        <id>Q96MA1</id>
    </interactant>
    <interactant intactId="EBI-18395721">
        <id>Q3LI59</id>
        <label>KRTAP21-2</label>
    </interactant>
    <organismsDiffer>false</organismsDiffer>
    <experiments>3</experiments>
</comment>
<comment type="interaction">
    <interactant intactId="EBI-954466">
        <id>Q96MA1</id>
    </interactant>
    <interactant intactId="EBI-10261141">
        <id>Q8IUC2</id>
        <label>KRTAP8-1</label>
    </interactant>
    <organismsDiffer>false</organismsDiffer>
    <experiments>3</experiments>
</comment>
<comment type="interaction">
    <interactant intactId="EBI-954466">
        <id>Q96MA1</id>
    </interactant>
    <interactant intactId="EBI-744023">
        <id>Q9BTL3</id>
        <label>RAMAC</label>
    </interactant>
    <organismsDiffer>false</organismsDiffer>
    <experiments>3</experiments>
</comment>
<comment type="interaction">
    <interactant intactId="EBI-954466">
        <id>Q96MA1</id>
    </interactant>
    <interactant intactId="EBI-11741437">
        <id>Q08117-2</id>
        <label>TLE5</label>
    </interactant>
    <organismsDiffer>false</organismsDiffer>
    <experiments>3</experiments>
</comment>
<comment type="interaction">
    <interactant intactId="EBI-954466">
        <id>Q96MA1</id>
    </interactant>
    <interactant intactId="EBI-9088321">
        <id>O94900</id>
        <label>TOX</label>
    </interactant>
    <organismsDiffer>false</organismsDiffer>
    <experiments>3</experiments>
</comment>
<comment type="subcellular location">
    <subcellularLocation>
        <location evidence="1">Nucleus</location>
    </subcellularLocation>
</comment>
<comment type="tissue specificity">
    <text evidence="3">Testis.</text>
</comment>
<comment type="similarity">
    <text evidence="4">Belongs to the DMRT family.</text>
</comment>
<gene>
    <name type="primary">DMRTB1</name>
</gene>
<proteinExistence type="evidence at protein level"/>
<feature type="chain" id="PRO_0000316012" description="Doublesex- and mab-3-related transcription factor B1">
    <location>
        <begin position="1"/>
        <end position="342"/>
    </location>
</feature>
<feature type="DNA-binding region" description="DM" evidence="1">
    <location>
        <begin position="11"/>
        <end position="58"/>
    </location>
</feature>
<feature type="region of interest" description="Disordered" evidence="2">
    <location>
        <begin position="91"/>
        <end position="131"/>
    </location>
</feature>
<feature type="region of interest" description="Disordered" evidence="2">
    <location>
        <begin position="245"/>
        <end position="342"/>
    </location>
</feature>
<feature type="compositionally biased region" description="Pro residues" evidence="2">
    <location>
        <begin position="263"/>
        <end position="284"/>
    </location>
</feature>
<feature type="compositionally biased region" description="Pro residues" evidence="2">
    <location>
        <begin position="295"/>
        <end position="305"/>
    </location>
</feature>
<feature type="compositionally biased region" description="Low complexity" evidence="2">
    <location>
        <begin position="331"/>
        <end position="342"/>
    </location>
</feature>
<organism>
    <name type="scientific">Homo sapiens</name>
    <name type="common">Human</name>
    <dbReference type="NCBI Taxonomy" id="9606"/>
    <lineage>
        <taxon>Eukaryota</taxon>
        <taxon>Metazoa</taxon>
        <taxon>Chordata</taxon>
        <taxon>Craniata</taxon>
        <taxon>Vertebrata</taxon>
        <taxon>Euteleostomi</taxon>
        <taxon>Mammalia</taxon>
        <taxon>Eutheria</taxon>
        <taxon>Euarchontoglires</taxon>
        <taxon>Primates</taxon>
        <taxon>Haplorrhini</taxon>
        <taxon>Catarrhini</taxon>
        <taxon>Hominidae</taxon>
        <taxon>Homo</taxon>
    </lineage>
</organism>
<dbReference type="EMBL" id="AK057273">
    <property type="protein sequence ID" value="BAB71407.1"/>
    <property type="molecule type" value="mRNA"/>
</dbReference>
<dbReference type="EMBL" id="AL365445">
    <property type="status" value="NOT_ANNOTATED_CDS"/>
    <property type="molecule type" value="Genomic_DNA"/>
</dbReference>
<dbReference type="EMBL" id="CH471059">
    <property type="protein sequence ID" value="EAX06736.1"/>
    <property type="molecule type" value="Genomic_DNA"/>
</dbReference>
<dbReference type="EMBL" id="AJ291671">
    <property type="protein sequence ID" value="CAC40654.1"/>
    <property type="molecule type" value="mRNA"/>
</dbReference>
<dbReference type="CCDS" id="CCDS581.1"/>
<dbReference type="RefSeq" id="NP_149056.1">
    <property type="nucleotide sequence ID" value="NM_033067.3"/>
</dbReference>
<dbReference type="SMR" id="Q96MA1"/>
<dbReference type="BioGRID" id="122012">
    <property type="interactions" value="121"/>
</dbReference>
<dbReference type="FunCoup" id="Q96MA1">
    <property type="interactions" value="188"/>
</dbReference>
<dbReference type="IntAct" id="Q96MA1">
    <property type="interactions" value="23"/>
</dbReference>
<dbReference type="MINT" id="Q96MA1"/>
<dbReference type="STRING" id="9606.ENSP00000360500"/>
<dbReference type="iPTMnet" id="Q96MA1"/>
<dbReference type="PhosphoSitePlus" id="Q96MA1"/>
<dbReference type="BioMuta" id="DMRTB1"/>
<dbReference type="DMDM" id="74752030"/>
<dbReference type="MassIVE" id="Q96MA1"/>
<dbReference type="PaxDb" id="9606-ENSP00000360500"/>
<dbReference type="PeptideAtlas" id="Q96MA1"/>
<dbReference type="ProteomicsDB" id="77325"/>
<dbReference type="Antibodypedia" id="19214">
    <property type="antibodies" value="90 antibodies from 20 providers"/>
</dbReference>
<dbReference type="DNASU" id="63948"/>
<dbReference type="Ensembl" id="ENST00000371445.3">
    <property type="protein sequence ID" value="ENSP00000360500.3"/>
    <property type="gene ID" value="ENSG00000143006.7"/>
</dbReference>
<dbReference type="GeneID" id="63948"/>
<dbReference type="KEGG" id="hsa:63948"/>
<dbReference type="MANE-Select" id="ENST00000371445.3">
    <property type="protein sequence ID" value="ENSP00000360500.3"/>
    <property type="RefSeq nucleotide sequence ID" value="NM_033067.3"/>
    <property type="RefSeq protein sequence ID" value="NP_149056.1"/>
</dbReference>
<dbReference type="UCSC" id="uc001cvq.2">
    <property type="organism name" value="human"/>
</dbReference>
<dbReference type="AGR" id="HGNC:13913"/>
<dbReference type="CTD" id="63948"/>
<dbReference type="DisGeNET" id="63948"/>
<dbReference type="GeneCards" id="DMRTB1"/>
<dbReference type="HGNC" id="HGNC:13913">
    <property type="gene designation" value="DMRTB1"/>
</dbReference>
<dbReference type="HPA" id="ENSG00000143006">
    <property type="expression patterns" value="Tissue enriched (testis)"/>
</dbReference>
<dbReference type="MIM" id="614805">
    <property type="type" value="gene"/>
</dbReference>
<dbReference type="neXtProt" id="NX_Q96MA1"/>
<dbReference type="OpenTargets" id="ENSG00000143006"/>
<dbReference type="PharmGKB" id="PA27386"/>
<dbReference type="VEuPathDB" id="HostDB:ENSG00000143006"/>
<dbReference type="eggNOG" id="KOG3815">
    <property type="taxonomic scope" value="Eukaryota"/>
</dbReference>
<dbReference type="GeneTree" id="ENSGT00940000161912"/>
<dbReference type="HOGENOM" id="CLU_073336_0_0_1"/>
<dbReference type="InParanoid" id="Q96MA1"/>
<dbReference type="OMA" id="FTDFGRP"/>
<dbReference type="OrthoDB" id="6162476at2759"/>
<dbReference type="PAN-GO" id="Q96MA1">
    <property type="GO annotations" value="6 GO annotations based on evolutionary models"/>
</dbReference>
<dbReference type="PhylomeDB" id="Q96MA1"/>
<dbReference type="TreeFam" id="TF317837"/>
<dbReference type="PathwayCommons" id="Q96MA1"/>
<dbReference type="SignaLink" id="Q96MA1"/>
<dbReference type="BioGRID-ORCS" id="63948">
    <property type="hits" value="35 hits in 1169 CRISPR screens"/>
</dbReference>
<dbReference type="GenomeRNAi" id="63948"/>
<dbReference type="Pharos" id="Q96MA1">
    <property type="development level" value="Tdark"/>
</dbReference>
<dbReference type="PRO" id="PR:Q96MA1"/>
<dbReference type="Proteomes" id="UP000005640">
    <property type="component" value="Chromosome 1"/>
</dbReference>
<dbReference type="RNAct" id="Q96MA1">
    <property type="molecule type" value="protein"/>
</dbReference>
<dbReference type="Bgee" id="ENSG00000143006">
    <property type="expression patterns" value="Expressed in oocyte and 32 other cell types or tissues"/>
</dbReference>
<dbReference type="GO" id="GO:0000785">
    <property type="term" value="C:chromatin"/>
    <property type="evidence" value="ECO:0000247"/>
    <property type="project" value="NTNU_SB"/>
</dbReference>
<dbReference type="GO" id="GO:0005634">
    <property type="term" value="C:nucleus"/>
    <property type="evidence" value="ECO:0000318"/>
    <property type="project" value="GO_Central"/>
</dbReference>
<dbReference type="GO" id="GO:0000981">
    <property type="term" value="F:DNA-binding transcription factor activity, RNA polymerase II-specific"/>
    <property type="evidence" value="ECO:0000247"/>
    <property type="project" value="NTNU_SB"/>
</dbReference>
<dbReference type="GO" id="GO:0046872">
    <property type="term" value="F:metal ion binding"/>
    <property type="evidence" value="ECO:0007669"/>
    <property type="project" value="UniProtKB-KW"/>
</dbReference>
<dbReference type="GO" id="GO:0000978">
    <property type="term" value="F:RNA polymerase II cis-regulatory region sequence-specific DNA binding"/>
    <property type="evidence" value="ECO:0000318"/>
    <property type="project" value="GO_Central"/>
</dbReference>
<dbReference type="GO" id="GO:0006357">
    <property type="term" value="P:regulation of transcription by RNA polymerase II"/>
    <property type="evidence" value="ECO:0000318"/>
    <property type="project" value="GO_Central"/>
</dbReference>
<dbReference type="GO" id="GO:0007548">
    <property type="term" value="P:sex differentiation"/>
    <property type="evidence" value="ECO:0000318"/>
    <property type="project" value="GO_Central"/>
</dbReference>
<dbReference type="FunFam" id="4.10.1040.10:FF:000001">
    <property type="entry name" value="doublesex- and mab-3-related transcription factor 1"/>
    <property type="match status" value="1"/>
</dbReference>
<dbReference type="Gene3D" id="4.10.1040.10">
    <property type="entry name" value="DM DNA-binding domain"/>
    <property type="match status" value="1"/>
</dbReference>
<dbReference type="InterPro" id="IPR001275">
    <property type="entry name" value="DM_DNA-bd"/>
</dbReference>
<dbReference type="InterPro" id="IPR036407">
    <property type="entry name" value="DM_DNA-bd_sf"/>
</dbReference>
<dbReference type="InterPro" id="IPR026607">
    <property type="entry name" value="DMRT"/>
</dbReference>
<dbReference type="PANTHER" id="PTHR12322">
    <property type="entry name" value="DOUBLESEX AND MAB-3 RELATED TRANSCRIPTION FACTOR DMRT"/>
    <property type="match status" value="1"/>
</dbReference>
<dbReference type="PANTHER" id="PTHR12322:SF66">
    <property type="entry name" value="DOUBLESEX- AND MAB-3-RELATED TRANSCRIPTION FACTOR B1"/>
    <property type="match status" value="1"/>
</dbReference>
<dbReference type="Pfam" id="PF00751">
    <property type="entry name" value="DM"/>
    <property type="match status" value="1"/>
</dbReference>
<dbReference type="SMART" id="SM00301">
    <property type="entry name" value="DM"/>
    <property type="match status" value="1"/>
</dbReference>
<dbReference type="SUPFAM" id="SSF82927">
    <property type="entry name" value="Cysteine-rich DNA binding domain, (DM domain)"/>
    <property type="match status" value="1"/>
</dbReference>
<dbReference type="PROSITE" id="PS40000">
    <property type="entry name" value="DM_1"/>
    <property type="match status" value="1"/>
</dbReference>
<dbReference type="PROSITE" id="PS50809">
    <property type="entry name" value="DM_2"/>
    <property type="match status" value="1"/>
</dbReference>
<keyword id="KW-0238">DNA-binding</keyword>
<keyword id="KW-0479">Metal-binding</keyword>
<keyword id="KW-0539">Nucleus</keyword>
<keyword id="KW-1267">Proteomics identification</keyword>
<keyword id="KW-1185">Reference proteome</keyword>
<keyword id="KW-0804">Transcription</keyword>
<keyword id="KW-0805">Transcription regulation</keyword>
<keyword id="KW-0862">Zinc</keyword>
<protein>
    <recommendedName>
        <fullName>Doublesex- and mab-3-related transcription factor B1</fullName>
    </recommendedName>
</protein>
<evidence type="ECO:0000255" key="1">
    <source>
        <dbReference type="PROSITE-ProRule" id="PRU00070"/>
    </source>
</evidence>
<evidence type="ECO:0000256" key="2">
    <source>
        <dbReference type="SAM" id="MobiDB-lite"/>
    </source>
</evidence>
<evidence type="ECO:0000269" key="3">
    <source>
    </source>
</evidence>
<evidence type="ECO:0000305" key="4"/>
<name>DMRTB_HUMAN</name>